<dbReference type="EMBL" id="DQ229107">
    <property type="protein sequence ID" value="ABA61976.1"/>
    <property type="molecule type" value="Genomic_DNA"/>
</dbReference>
<dbReference type="RefSeq" id="YP_635704.1">
    <property type="nucleotide sequence ID" value="NC_008097.1"/>
</dbReference>
<dbReference type="SMR" id="Q1ACP3"/>
<dbReference type="GeneID" id="4100199"/>
<dbReference type="GO" id="GO:0009507">
    <property type="term" value="C:chloroplast"/>
    <property type="evidence" value="ECO:0007669"/>
    <property type="project" value="UniProtKB-SubCell"/>
</dbReference>
<dbReference type="GO" id="GO:0015935">
    <property type="term" value="C:small ribosomal subunit"/>
    <property type="evidence" value="ECO:0007669"/>
    <property type="project" value="InterPro"/>
</dbReference>
<dbReference type="GO" id="GO:0019843">
    <property type="term" value="F:rRNA binding"/>
    <property type="evidence" value="ECO:0007669"/>
    <property type="project" value="UniProtKB-UniRule"/>
</dbReference>
<dbReference type="GO" id="GO:0003735">
    <property type="term" value="F:structural constituent of ribosome"/>
    <property type="evidence" value="ECO:0007669"/>
    <property type="project" value="InterPro"/>
</dbReference>
<dbReference type="GO" id="GO:0006412">
    <property type="term" value="P:translation"/>
    <property type="evidence" value="ECO:0007669"/>
    <property type="project" value="UniProtKB-UniRule"/>
</dbReference>
<dbReference type="CDD" id="cd03368">
    <property type="entry name" value="Ribosomal_S12"/>
    <property type="match status" value="1"/>
</dbReference>
<dbReference type="FunFam" id="2.40.50.140:FF:000001">
    <property type="entry name" value="30S ribosomal protein S12"/>
    <property type="match status" value="1"/>
</dbReference>
<dbReference type="Gene3D" id="2.40.50.140">
    <property type="entry name" value="Nucleic acid-binding proteins"/>
    <property type="match status" value="1"/>
</dbReference>
<dbReference type="HAMAP" id="MF_00403_B">
    <property type="entry name" value="Ribosomal_uS12_B"/>
    <property type="match status" value="1"/>
</dbReference>
<dbReference type="InterPro" id="IPR012340">
    <property type="entry name" value="NA-bd_OB-fold"/>
</dbReference>
<dbReference type="InterPro" id="IPR006032">
    <property type="entry name" value="Ribosomal_uS12"/>
</dbReference>
<dbReference type="InterPro" id="IPR005679">
    <property type="entry name" value="Ribosomal_uS12_bac"/>
</dbReference>
<dbReference type="NCBIfam" id="TIGR00981">
    <property type="entry name" value="rpsL_bact"/>
    <property type="match status" value="1"/>
</dbReference>
<dbReference type="PANTHER" id="PTHR11652">
    <property type="entry name" value="30S RIBOSOMAL PROTEIN S12 FAMILY MEMBER"/>
    <property type="match status" value="1"/>
</dbReference>
<dbReference type="Pfam" id="PF00164">
    <property type="entry name" value="Ribosom_S12_S23"/>
    <property type="match status" value="1"/>
</dbReference>
<dbReference type="PIRSF" id="PIRSF002133">
    <property type="entry name" value="Ribosomal_S12/S23"/>
    <property type="match status" value="1"/>
</dbReference>
<dbReference type="PRINTS" id="PR01034">
    <property type="entry name" value="RIBOSOMALS12"/>
</dbReference>
<dbReference type="SUPFAM" id="SSF50249">
    <property type="entry name" value="Nucleic acid-binding proteins"/>
    <property type="match status" value="1"/>
</dbReference>
<dbReference type="PROSITE" id="PS00055">
    <property type="entry name" value="RIBOSOMAL_S12"/>
    <property type="match status" value="1"/>
</dbReference>
<keyword id="KW-0150">Chloroplast</keyword>
<keyword id="KW-0934">Plastid</keyword>
<keyword id="KW-0687">Ribonucleoprotein</keyword>
<keyword id="KW-0689">Ribosomal protein</keyword>
<keyword id="KW-0694">RNA-binding</keyword>
<keyword id="KW-0699">rRNA-binding</keyword>
<comment type="function">
    <text evidence="1">With S4 and S5 plays an important role in translational accuracy. Located at the interface of the 30S and 50S subunits (By similarity).</text>
</comment>
<comment type="subunit">
    <text evidence="1">Part of the 30S ribosomal subunit.</text>
</comment>
<comment type="subcellular location">
    <subcellularLocation>
        <location>Plastid</location>
        <location>Chloroplast</location>
    </subcellularLocation>
</comment>
<comment type="similarity">
    <text evidence="2">Belongs to the universal ribosomal protein uS12 family.</text>
</comment>
<accession>Q1ACP3</accession>
<name>RR12_CHAVU</name>
<gene>
    <name type="primary">rps12</name>
</gene>
<feature type="chain" id="PRO_0000276605" description="Small ribosomal subunit protein uS12c">
    <location>
        <begin position="1"/>
        <end position="123"/>
    </location>
</feature>
<protein>
    <recommendedName>
        <fullName evidence="2">Small ribosomal subunit protein uS12c</fullName>
    </recommendedName>
    <alternativeName>
        <fullName>30S ribosomal protein S12, chloroplastic</fullName>
    </alternativeName>
</protein>
<geneLocation type="chloroplast"/>
<proteinExistence type="inferred from homology"/>
<organism>
    <name type="scientific">Chara vulgaris</name>
    <name type="common">Common stonewort</name>
    <dbReference type="NCBI Taxonomy" id="55564"/>
    <lineage>
        <taxon>Eukaryota</taxon>
        <taxon>Viridiplantae</taxon>
        <taxon>Streptophyta</taxon>
        <taxon>Charophyceae</taxon>
        <taxon>Charales</taxon>
        <taxon>Characeae</taxon>
        <taxon>Chara</taxon>
    </lineage>
</organism>
<reference key="1">
    <citation type="journal article" date="2006" name="Mol. Biol. Evol.">
        <title>The chloroplast genome sequence of Chara vulgaris sheds new light into the closest green algal relatives of land plants.</title>
        <authorList>
            <person name="Turmel M."/>
            <person name="Otis C."/>
            <person name="Lemieux C."/>
        </authorList>
    </citation>
    <scope>NUCLEOTIDE SEQUENCE [LARGE SCALE GENOMIC DNA]</scope>
</reference>
<evidence type="ECO:0000250" key="1"/>
<evidence type="ECO:0000305" key="2"/>
<sequence>MTTIQQLIRKKRKPIENKTKSPALRNCPQRRGVCIRVYTTTPKKPNSALRKVARVRLTSSFEVTAYIPGIGHNLQEHSVVLVRGGRVKDLPGVRYHIVRGTLDTIGVKDRCQGRSKYGTKRPK</sequence>